<accession>B2IMA2</accession>
<keyword id="KW-0067">ATP-binding</keyword>
<keyword id="KW-0963">Cytoplasm</keyword>
<keyword id="KW-0324">Glycolysis</keyword>
<keyword id="KW-0418">Kinase</keyword>
<keyword id="KW-0547">Nucleotide-binding</keyword>
<keyword id="KW-0808">Transferase</keyword>
<comment type="catalytic activity">
    <reaction evidence="1">
        <text>(2R)-3-phosphoglycerate + ATP = (2R)-3-phospho-glyceroyl phosphate + ADP</text>
        <dbReference type="Rhea" id="RHEA:14801"/>
        <dbReference type="ChEBI" id="CHEBI:30616"/>
        <dbReference type="ChEBI" id="CHEBI:57604"/>
        <dbReference type="ChEBI" id="CHEBI:58272"/>
        <dbReference type="ChEBI" id="CHEBI:456216"/>
        <dbReference type="EC" id="2.7.2.3"/>
    </reaction>
</comment>
<comment type="pathway">
    <text evidence="1">Carbohydrate degradation; glycolysis; pyruvate from D-glyceraldehyde 3-phosphate: step 2/5.</text>
</comment>
<comment type="subunit">
    <text evidence="1">Monomer.</text>
</comment>
<comment type="subcellular location">
    <subcellularLocation>
        <location evidence="1">Cytoplasm</location>
    </subcellularLocation>
</comment>
<comment type="similarity">
    <text evidence="1">Belongs to the phosphoglycerate kinase family.</text>
</comment>
<proteinExistence type="inferred from homology"/>
<protein>
    <recommendedName>
        <fullName evidence="1">Phosphoglycerate kinase</fullName>
        <ecNumber evidence="1">2.7.2.3</ecNumber>
    </recommendedName>
</protein>
<name>PGK_STRPS</name>
<organism>
    <name type="scientific">Streptococcus pneumoniae (strain CGSP14)</name>
    <dbReference type="NCBI Taxonomy" id="516950"/>
    <lineage>
        <taxon>Bacteria</taxon>
        <taxon>Bacillati</taxon>
        <taxon>Bacillota</taxon>
        <taxon>Bacilli</taxon>
        <taxon>Lactobacillales</taxon>
        <taxon>Streptococcaceae</taxon>
        <taxon>Streptococcus</taxon>
    </lineage>
</organism>
<evidence type="ECO:0000255" key="1">
    <source>
        <dbReference type="HAMAP-Rule" id="MF_00145"/>
    </source>
</evidence>
<gene>
    <name evidence="1" type="primary">pgk</name>
    <name type="ordered locus">SPCG_0477</name>
</gene>
<feature type="chain" id="PRO_1000096384" description="Phosphoglycerate kinase">
    <location>
        <begin position="1"/>
        <end position="398"/>
    </location>
</feature>
<feature type="binding site" evidence="1">
    <location>
        <begin position="21"/>
        <end position="23"/>
    </location>
    <ligand>
        <name>substrate</name>
    </ligand>
</feature>
<feature type="binding site" evidence="1">
    <location>
        <position position="36"/>
    </location>
    <ligand>
        <name>substrate</name>
    </ligand>
</feature>
<feature type="binding site" evidence="1">
    <location>
        <begin position="59"/>
        <end position="62"/>
    </location>
    <ligand>
        <name>substrate</name>
    </ligand>
</feature>
<feature type="binding site" evidence="1">
    <location>
        <position position="119"/>
    </location>
    <ligand>
        <name>substrate</name>
    </ligand>
</feature>
<feature type="binding site" evidence="1">
    <location>
        <position position="157"/>
    </location>
    <ligand>
        <name>substrate</name>
    </ligand>
</feature>
<feature type="binding site" evidence="1">
    <location>
        <position position="208"/>
    </location>
    <ligand>
        <name>ATP</name>
        <dbReference type="ChEBI" id="CHEBI:30616"/>
    </ligand>
</feature>
<feature type="binding site" evidence="1">
    <location>
        <position position="296"/>
    </location>
    <ligand>
        <name>ATP</name>
        <dbReference type="ChEBI" id="CHEBI:30616"/>
    </ligand>
</feature>
<feature type="binding site" evidence="1">
    <location>
        <position position="327"/>
    </location>
    <ligand>
        <name>ATP</name>
        <dbReference type="ChEBI" id="CHEBI:30616"/>
    </ligand>
</feature>
<feature type="binding site" evidence="1">
    <location>
        <begin position="354"/>
        <end position="357"/>
    </location>
    <ligand>
        <name>ATP</name>
        <dbReference type="ChEBI" id="CHEBI:30616"/>
    </ligand>
</feature>
<sequence length="398" mass="41923">MAKLTVKDVDLKGKKVLVRVDFNVPLKDGVITNDNRITAALPTIKYIIEQGGRAILFSHLGRVKEEADKAGKSLAPVAADLAAKLGQDVVFPGVTRGAELEAAINALEDGQVLLVENTRYEDVDGKKESKNDPELGKYWASLGDGIFVNDAFGTAHRAHASNVGISANVEKAVAGFLLENEIAYIQEAVETPERPFVAILGGSKVSDKIGVIENLLEKADKVLIGGGMTYTFYKAQGIEIGNSLVEEDKLDVAKALLEKANGKLILPVDSKEANAFAGYTEVRDTEGEAVSEGFLGLDIGPKSIAKFDEALTGAKTVVWNGPMGVFENPDFQAGTIGVMDAIVKQPGVKSIIGGGDSAAAAINLGRADKFSWISTGGGASMELLEGKVLPGLAALTEK</sequence>
<dbReference type="EC" id="2.7.2.3" evidence="1"/>
<dbReference type="EMBL" id="CP001033">
    <property type="protein sequence ID" value="ACB89729.1"/>
    <property type="molecule type" value="Genomic_DNA"/>
</dbReference>
<dbReference type="RefSeq" id="WP_001096743.1">
    <property type="nucleotide sequence ID" value="NC_010582.1"/>
</dbReference>
<dbReference type="SMR" id="B2IMA2"/>
<dbReference type="KEGG" id="spw:SPCG_0477"/>
<dbReference type="HOGENOM" id="CLU_025427_0_1_9"/>
<dbReference type="UniPathway" id="UPA00109">
    <property type="reaction ID" value="UER00185"/>
</dbReference>
<dbReference type="GO" id="GO:0005829">
    <property type="term" value="C:cytosol"/>
    <property type="evidence" value="ECO:0007669"/>
    <property type="project" value="TreeGrafter"/>
</dbReference>
<dbReference type="GO" id="GO:0043531">
    <property type="term" value="F:ADP binding"/>
    <property type="evidence" value="ECO:0007669"/>
    <property type="project" value="TreeGrafter"/>
</dbReference>
<dbReference type="GO" id="GO:0005524">
    <property type="term" value="F:ATP binding"/>
    <property type="evidence" value="ECO:0007669"/>
    <property type="project" value="UniProtKB-KW"/>
</dbReference>
<dbReference type="GO" id="GO:0004618">
    <property type="term" value="F:phosphoglycerate kinase activity"/>
    <property type="evidence" value="ECO:0007669"/>
    <property type="project" value="UniProtKB-UniRule"/>
</dbReference>
<dbReference type="GO" id="GO:0006094">
    <property type="term" value="P:gluconeogenesis"/>
    <property type="evidence" value="ECO:0007669"/>
    <property type="project" value="TreeGrafter"/>
</dbReference>
<dbReference type="GO" id="GO:0006096">
    <property type="term" value="P:glycolytic process"/>
    <property type="evidence" value="ECO:0007669"/>
    <property type="project" value="UniProtKB-UniRule"/>
</dbReference>
<dbReference type="FunFam" id="3.40.50.1260:FF:000001">
    <property type="entry name" value="Phosphoglycerate kinase"/>
    <property type="match status" value="1"/>
</dbReference>
<dbReference type="FunFam" id="3.40.50.1260:FF:000008">
    <property type="entry name" value="Phosphoglycerate kinase"/>
    <property type="match status" value="1"/>
</dbReference>
<dbReference type="Gene3D" id="3.40.50.1260">
    <property type="entry name" value="Phosphoglycerate kinase, N-terminal domain"/>
    <property type="match status" value="2"/>
</dbReference>
<dbReference type="HAMAP" id="MF_00145">
    <property type="entry name" value="Phosphoglyc_kinase"/>
    <property type="match status" value="1"/>
</dbReference>
<dbReference type="InterPro" id="IPR001576">
    <property type="entry name" value="Phosphoglycerate_kinase"/>
</dbReference>
<dbReference type="InterPro" id="IPR015911">
    <property type="entry name" value="Phosphoglycerate_kinase_CS"/>
</dbReference>
<dbReference type="InterPro" id="IPR015824">
    <property type="entry name" value="Phosphoglycerate_kinase_N"/>
</dbReference>
<dbReference type="InterPro" id="IPR036043">
    <property type="entry name" value="Phosphoglycerate_kinase_sf"/>
</dbReference>
<dbReference type="PANTHER" id="PTHR11406">
    <property type="entry name" value="PHOSPHOGLYCERATE KINASE"/>
    <property type="match status" value="1"/>
</dbReference>
<dbReference type="PANTHER" id="PTHR11406:SF23">
    <property type="entry name" value="PHOSPHOGLYCERATE KINASE 1, CHLOROPLASTIC-RELATED"/>
    <property type="match status" value="1"/>
</dbReference>
<dbReference type="Pfam" id="PF00162">
    <property type="entry name" value="PGK"/>
    <property type="match status" value="1"/>
</dbReference>
<dbReference type="PIRSF" id="PIRSF000724">
    <property type="entry name" value="Pgk"/>
    <property type="match status" value="1"/>
</dbReference>
<dbReference type="PRINTS" id="PR00477">
    <property type="entry name" value="PHGLYCKINASE"/>
</dbReference>
<dbReference type="SUPFAM" id="SSF53748">
    <property type="entry name" value="Phosphoglycerate kinase"/>
    <property type="match status" value="1"/>
</dbReference>
<dbReference type="PROSITE" id="PS00111">
    <property type="entry name" value="PGLYCERATE_KINASE"/>
    <property type="match status" value="1"/>
</dbReference>
<reference key="1">
    <citation type="journal article" date="2009" name="BMC Genomics">
        <title>Genome evolution driven by host adaptations results in a more virulent and antimicrobial-resistant Streptococcus pneumoniae serotype 14.</title>
        <authorList>
            <person name="Ding F."/>
            <person name="Tang P."/>
            <person name="Hsu M.-H."/>
            <person name="Cui P."/>
            <person name="Hu S."/>
            <person name="Yu J."/>
            <person name="Chiu C.-H."/>
        </authorList>
    </citation>
    <scope>NUCLEOTIDE SEQUENCE [LARGE SCALE GENOMIC DNA]</scope>
    <source>
        <strain>CGSP14</strain>
    </source>
</reference>